<reference key="1">
    <citation type="journal article" date="2011" name="J. Bacteriol.">
        <title>Genome sequence of Thermotoga sp. strain RQ2, a hyperthermophilic bacterium isolated from a geothermally heated region of the seafloor near Ribeira Quente, the Azores.</title>
        <authorList>
            <person name="Swithers K.S."/>
            <person name="DiPippo J.L."/>
            <person name="Bruce D.C."/>
            <person name="Detter C."/>
            <person name="Tapia R."/>
            <person name="Han S."/>
            <person name="Saunders E."/>
            <person name="Goodwin L.A."/>
            <person name="Han J."/>
            <person name="Woyke T."/>
            <person name="Pitluck S."/>
            <person name="Pennacchio L."/>
            <person name="Nolan M."/>
            <person name="Mikhailova N."/>
            <person name="Lykidis A."/>
            <person name="Land M.L."/>
            <person name="Brettin T."/>
            <person name="Stetter K.O."/>
            <person name="Nelson K.E."/>
            <person name="Gogarten J.P."/>
            <person name="Noll K.M."/>
        </authorList>
    </citation>
    <scope>NUCLEOTIDE SEQUENCE [LARGE SCALE GENOMIC DNA]</scope>
    <source>
        <strain>RQ2</strain>
    </source>
</reference>
<sequence length="369" mass="42374">MKKEKKDYYEILGVPRDATQEEIKRAYKRLVKEWHPDRHPENRKEAEQRFKEIQEAYEVLSDPQKRAMYDRFGYVGEQPTYQETESGGFFDDIFREFENIFNRDIFDVFFGERPHQEERREYARRGEDIRYEIEVTLSDLINGAEIPVEYERYETCPRCGGTGVEPNAGYINCPSCGGTGRIREERRSFFGYFVSERTCERCGGTGKIPREYCHECGGSGRVLRKVRKTVKIPPNVEDGTQLRITGGGNAGYYGGPYGDLIVIVRVKPDPRFKKSGSDLVYDITIDYLQAILGTTVEVPLPEGGTTMLKIPPGTQPETVFRLKGKGLPNRYGRRGDLIVNVHVEIPKSLSREERKVLEELAKKRGVTID</sequence>
<organism>
    <name type="scientific">Thermotoga sp. (strain RQ2)</name>
    <dbReference type="NCBI Taxonomy" id="126740"/>
    <lineage>
        <taxon>Bacteria</taxon>
        <taxon>Thermotogati</taxon>
        <taxon>Thermotogota</taxon>
        <taxon>Thermotogae</taxon>
        <taxon>Thermotogales</taxon>
        <taxon>Thermotogaceae</taxon>
        <taxon>Thermotoga</taxon>
    </lineage>
</organism>
<accession>B1LCI2</accession>
<feature type="chain" id="PRO_1000137735" description="Chaperone protein DnaJ">
    <location>
        <begin position="1"/>
        <end position="369"/>
    </location>
</feature>
<feature type="domain" description="J" evidence="1">
    <location>
        <begin position="7"/>
        <end position="73"/>
    </location>
</feature>
<feature type="repeat" description="CXXCXGXG motif">
    <location>
        <begin position="156"/>
        <end position="163"/>
    </location>
</feature>
<feature type="repeat" description="CXXCXGXG motif">
    <location>
        <begin position="173"/>
        <end position="180"/>
    </location>
</feature>
<feature type="repeat" description="CXXCXGXG motif">
    <location>
        <begin position="199"/>
        <end position="206"/>
    </location>
</feature>
<feature type="repeat" description="CXXCXGXG motif">
    <location>
        <begin position="213"/>
        <end position="220"/>
    </location>
</feature>
<feature type="zinc finger region" description="CR-type" evidence="1">
    <location>
        <begin position="143"/>
        <end position="225"/>
    </location>
</feature>
<feature type="binding site" evidence="1">
    <location>
        <position position="156"/>
    </location>
    <ligand>
        <name>Zn(2+)</name>
        <dbReference type="ChEBI" id="CHEBI:29105"/>
        <label>1</label>
    </ligand>
</feature>
<feature type="binding site" evidence="1">
    <location>
        <position position="159"/>
    </location>
    <ligand>
        <name>Zn(2+)</name>
        <dbReference type="ChEBI" id="CHEBI:29105"/>
        <label>1</label>
    </ligand>
</feature>
<feature type="binding site" evidence="1">
    <location>
        <position position="173"/>
    </location>
    <ligand>
        <name>Zn(2+)</name>
        <dbReference type="ChEBI" id="CHEBI:29105"/>
        <label>2</label>
    </ligand>
</feature>
<feature type="binding site" evidence="1">
    <location>
        <position position="176"/>
    </location>
    <ligand>
        <name>Zn(2+)</name>
        <dbReference type="ChEBI" id="CHEBI:29105"/>
        <label>2</label>
    </ligand>
</feature>
<feature type="binding site" evidence="1">
    <location>
        <position position="199"/>
    </location>
    <ligand>
        <name>Zn(2+)</name>
        <dbReference type="ChEBI" id="CHEBI:29105"/>
        <label>2</label>
    </ligand>
</feature>
<feature type="binding site" evidence="1">
    <location>
        <position position="202"/>
    </location>
    <ligand>
        <name>Zn(2+)</name>
        <dbReference type="ChEBI" id="CHEBI:29105"/>
        <label>2</label>
    </ligand>
</feature>
<feature type="binding site" evidence="1">
    <location>
        <position position="213"/>
    </location>
    <ligand>
        <name>Zn(2+)</name>
        <dbReference type="ChEBI" id="CHEBI:29105"/>
        <label>1</label>
    </ligand>
</feature>
<feature type="binding site" evidence="1">
    <location>
        <position position="216"/>
    </location>
    <ligand>
        <name>Zn(2+)</name>
        <dbReference type="ChEBI" id="CHEBI:29105"/>
        <label>1</label>
    </ligand>
</feature>
<evidence type="ECO:0000255" key="1">
    <source>
        <dbReference type="HAMAP-Rule" id="MF_01152"/>
    </source>
</evidence>
<dbReference type="EMBL" id="CP000969">
    <property type="protein sequence ID" value="ACB08440.1"/>
    <property type="molecule type" value="Genomic_DNA"/>
</dbReference>
<dbReference type="RefSeq" id="WP_012310308.1">
    <property type="nucleotide sequence ID" value="NC_010483.1"/>
</dbReference>
<dbReference type="SMR" id="B1LCI2"/>
<dbReference type="KEGG" id="trq:TRQ2_0078"/>
<dbReference type="HOGENOM" id="CLU_017633_0_7_0"/>
<dbReference type="Proteomes" id="UP000001687">
    <property type="component" value="Chromosome"/>
</dbReference>
<dbReference type="GO" id="GO:0005737">
    <property type="term" value="C:cytoplasm"/>
    <property type="evidence" value="ECO:0007669"/>
    <property type="project" value="UniProtKB-SubCell"/>
</dbReference>
<dbReference type="GO" id="GO:0005524">
    <property type="term" value="F:ATP binding"/>
    <property type="evidence" value="ECO:0007669"/>
    <property type="project" value="InterPro"/>
</dbReference>
<dbReference type="GO" id="GO:0031072">
    <property type="term" value="F:heat shock protein binding"/>
    <property type="evidence" value="ECO:0007669"/>
    <property type="project" value="InterPro"/>
</dbReference>
<dbReference type="GO" id="GO:0051082">
    <property type="term" value="F:unfolded protein binding"/>
    <property type="evidence" value="ECO:0007669"/>
    <property type="project" value="UniProtKB-UniRule"/>
</dbReference>
<dbReference type="GO" id="GO:0008270">
    <property type="term" value="F:zinc ion binding"/>
    <property type="evidence" value="ECO:0007669"/>
    <property type="project" value="UniProtKB-UniRule"/>
</dbReference>
<dbReference type="GO" id="GO:0051085">
    <property type="term" value="P:chaperone cofactor-dependent protein refolding"/>
    <property type="evidence" value="ECO:0007669"/>
    <property type="project" value="TreeGrafter"/>
</dbReference>
<dbReference type="GO" id="GO:0006260">
    <property type="term" value="P:DNA replication"/>
    <property type="evidence" value="ECO:0007669"/>
    <property type="project" value="UniProtKB-KW"/>
</dbReference>
<dbReference type="GO" id="GO:0042026">
    <property type="term" value="P:protein refolding"/>
    <property type="evidence" value="ECO:0007669"/>
    <property type="project" value="TreeGrafter"/>
</dbReference>
<dbReference type="GO" id="GO:0009408">
    <property type="term" value="P:response to heat"/>
    <property type="evidence" value="ECO:0007669"/>
    <property type="project" value="InterPro"/>
</dbReference>
<dbReference type="CDD" id="cd06257">
    <property type="entry name" value="DnaJ"/>
    <property type="match status" value="1"/>
</dbReference>
<dbReference type="CDD" id="cd10747">
    <property type="entry name" value="DnaJ_C"/>
    <property type="match status" value="1"/>
</dbReference>
<dbReference type="CDD" id="cd10719">
    <property type="entry name" value="DnaJ_zf"/>
    <property type="match status" value="1"/>
</dbReference>
<dbReference type="FunFam" id="1.10.287.110:FF:000034">
    <property type="entry name" value="Chaperone protein DnaJ"/>
    <property type="match status" value="1"/>
</dbReference>
<dbReference type="FunFam" id="2.60.260.20:FF:000005">
    <property type="entry name" value="Chaperone protein dnaJ 1, mitochondrial"/>
    <property type="match status" value="1"/>
</dbReference>
<dbReference type="FunFam" id="2.10.230.10:FF:000002">
    <property type="entry name" value="Molecular chaperone DnaJ"/>
    <property type="match status" value="1"/>
</dbReference>
<dbReference type="Gene3D" id="6.20.20.10">
    <property type="match status" value="2"/>
</dbReference>
<dbReference type="Gene3D" id="1.10.287.110">
    <property type="entry name" value="DnaJ domain"/>
    <property type="match status" value="1"/>
</dbReference>
<dbReference type="Gene3D" id="2.60.260.20">
    <property type="entry name" value="Urease metallochaperone UreE, N-terminal domain"/>
    <property type="match status" value="2"/>
</dbReference>
<dbReference type="HAMAP" id="MF_01152">
    <property type="entry name" value="DnaJ"/>
    <property type="match status" value="1"/>
</dbReference>
<dbReference type="InterPro" id="IPR012724">
    <property type="entry name" value="DnaJ"/>
</dbReference>
<dbReference type="InterPro" id="IPR002939">
    <property type="entry name" value="DnaJ_C"/>
</dbReference>
<dbReference type="InterPro" id="IPR001623">
    <property type="entry name" value="DnaJ_domain"/>
</dbReference>
<dbReference type="InterPro" id="IPR018253">
    <property type="entry name" value="DnaJ_domain_CS"/>
</dbReference>
<dbReference type="InterPro" id="IPR008971">
    <property type="entry name" value="HSP40/DnaJ_pept-bd"/>
</dbReference>
<dbReference type="InterPro" id="IPR001305">
    <property type="entry name" value="HSP_DnaJ_Cys-rich_dom"/>
</dbReference>
<dbReference type="InterPro" id="IPR036410">
    <property type="entry name" value="HSP_DnaJ_Cys-rich_dom_sf"/>
</dbReference>
<dbReference type="InterPro" id="IPR036869">
    <property type="entry name" value="J_dom_sf"/>
</dbReference>
<dbReference type="NCBIfam" id="TIGR02349">
    <property type="entry name" value="DnaJ_bact"/>
    <property type="match status" value="1"/>
</dbReference>
<dbReference type="NCBIfam" id="NF008035">
    <property type="entry name" value="PRK10767.1"/>
    <property type="match status" value="1"/>
</dbReference>
<dbReference type="NCBIfam" id="NF010875">
    <property type="entry name" value="PRK14282.1"/>
    <property type="match status" value="1"/>
</dbReference>
<dbReference type="PANTHER" id="PTHR43096">
    <property type="entry name" value="DNAJ HOMOLOG 1, MITOCHONDRIAL-RELATED"/>
    <property type="match status" value="1"/>
</dbReference>
<dbReference type="PANTHER" id="PTHR43096:SF52">
    <property type="entry name" value="DNAJ HOMOLOG 1, MITOCHONDRIAL-RELATED"/>
    <property type="match status" value="1"/>
</dbReference>
<dbReference type="Pfam" id="PF00226">
    <property type="entry name" value="DnaJ"/>
    <property type="match status" value="1"/>
</dbReference>
<dbReference type="Pfam" id="PF01556">
    <property type="entry name" value="DnaJ_C"/>
    <property type="match status" value="1"/>
</dbReference>
<dbReference type="Pfam" id="PF00684">
    <property type="entry name" value="DnaJ_CXXCXGXG"/>
    <property type="match status" value="1"/>
</dbReference>
<dbReference type="PRINTS" id="PR00625">
    <property type="entry name" value="JDOMAIN"/>
</dbReference>
<dbReference type="SMART" id="SM00271">
    <property type="entry name" value="DnaJ"/>
    <property type="match status" value="1"/>
</dbReference>
<dbReference type="SUPFAM" id="SSF46565">
    <property type="entry name" value="Chaperone J-domain"/>
    <property type="match status" value="1"/>
</dbReference>
<dbReference type="SUPFAM" id="SSF57938">
    <property type="entry name" value="DnaJ/Hsp40 cysteine-rich domain"/>
    <property type="match status" value="1"/>
</dbReference>
<dbReference type="SUPFAM" id="SSF49493">
    <property type="entry name" value="HSP40/DnaJ peptide-binding domain"/>
    <property type="match status" value="2"/>
</dbReference>
<dbReference type="PROSITE" id="PS00636">
    <property type="entry name" value="DNAJ_1"/>
    <property type="match status" value="1"/>
</dbReference>
<dbReference type="PROSITE" id="PS50076">
    <property type="entry name" value="DNAJ_2"/>
    <property type="match status" value="1"/>
</dbReference>
<dbReference type="PROSITE" id="PS51188">
    <property type="entry name" value="ZF_CR"/>
    <property type="match status" value="1"/>
</dbReference>
<name>DNAJ_THESQ</name>
<gene>
    <name evidence="1" type="primary">dnaJ</name>
    <name type="ordered locus">TRQ2_0078</name>
</gene>
<protein>
    <recommendedName>
        <fullName evidence="1">Chaperone protein DnaJ</fullName>
    </recommendedName>
</protein>
<proteinExistence type="inferred from homology"/>
<comment type="function">
    <text evidence="1">Participates actively in the response to hyperosmotic and heat shock by preventing the aggregation of stress-denatured proteins and by disaggregating proteins, also in an autonomous, DnaK-independent fashion. Unfolded proteins bind initially to DnaJ; upon interaction with the DnaJ-bound protein, DnaK hydrolyzes its bound ATP, resulting in the formation of a stable complex. GrpE releases ADP from DnaK; ATP binding to DnaK triggers the release of the substrate protein, thus completing the reaction cycle. Several rounds of ATP-dependent interactions between DnaJ, DnaK and GrpE are required for fully efficient folding. Also involved, together with DnaK and GrpE, in the DNA replication of plasmids through activation of initiation proteins.</text>
</comment>
<comment type="cofactor">
    <cofactor evidence="1">
        <name>Zn(2+)</name>
        <dbReference type="ChEBI" id="CHEBI:29105"/>
    </cofactor>
    <text evidence="1">Binds 2 Zn(2+) ions per monomer.</text>
</comment>
<comment type="subunit">
    <text evidence="1">Homodimer.</text>
</comment>
<comment type="subcellular location">
    <subcellularLocation>
        <location evidence="1">Cytoplasm</location>
    </subcellularLocation>
</comment>
<comment type="domain">
    <text evidence="1">The J domain is necessary and sufficient to stimulate DnaK ATPase activity. Zinc center 1 plays an important role in the autonomous, DnaK-independent chaperone activity of DnaJ. Zinc center 2 is essential for interaction with DnaK and for DnaJ activity.</text>
</comment>
<comment type="similarity">
    <text evidence="1">Belongs to the DnaJ family.</text>
</comment>
<keyword id="KW-0143">Chaperone</keyword>
<keyword id="KW-0963">Cytoplasm</keyword>
<keyword id="KW-0235">DNA replication</keyword>
<keyword id="KW-0479">Metal-binding</keyword>
<keyword id="KW-0677">Repeat</keyword>
<keyword id="KW-0346">Stress response</keyword>
<keyword id="KW-0862">Zinc</keyword>
<keyword id="KW-0863">Zinc-finger</keyword>